<protein>
    <recommendedName>
        <fullName evidence="1">Threonylcarbamoyl-AMP synthase</fullName>
        <shortName evidence="1">TC-AMP synthase</shortName>
        <ecNumber evidence="1">2.7.7.87</ecNumber>
    </recommendedName>
    <alternativeName>
        <fullName evidence="1">L-threonylcarbamoyladenylate synthase</fullName>
    </alternativeName>
    <alternativeName>
        <fullName>Ribosome maturation factor TsaC</fullName>
    </alternativeName>
    <alternativeName>
        <fullName evidence="1">t(6)A37 threonylcarbamoyladenosine biosynthesis protein TsaC</fullName>
    </alternativeName>
    <alternativeName>
        <fullName evidence="1">tRNA threonylcarbamoyladenosine biosynthesis protein TsaC</fullName>
    </alternativeName>
</protein>
<organism>
    <name type="scientific">Escherichia coli (strain K12)</name>
    <dbReference type="NCBI Taxonomy" id="83333"/>
    <lineage>
        <taxon>Bacteria</taxon>
        <taxon>Pseudomonadati</taxon>
        <taxon>Pseudomonadota</taxon>
        <taxon>Gammaproteobacteria</taxon>
        <taxon>Enterobacterales</taxon>
        <taxon>Enterobacteriaceae</taxon>
        <taxon>Escherichia</taxon>
    </lineage>
</organism>
<sequence length="190" mass="20768">MNNNLQRDAIAAAIDVLNEERVIAYPTEAVFGVGCDPDSETAVMRLLELKQRPVDKGLILIAANYEQLKPYIDDTMLTDVQRETIFSRWPGPVTFVFPAPATTPRWLTGRFDSLAVRVTDHPLVVALCQAYGKPLVSTSANLSGLPPCRTVDEVRAQFGAAFPVVPGETGGRLNPSEIRDALTGELFRQG</sequence>
<dbReference type="EC" id="2.7.7.87" evidence="1"/>
<dbReference type="EMBL" id="U18997">
    <property type="protein sequence ID" value="AAA58079.1"/>
    <property type="status" value="ALT_FRAME"/>
    <property type="molecule type" value="Genomic_DNA"/>
</dbReference>
<dbReference type="EMBL" id="U00096">
    <property type="protein sequence ID" value="AAC76307.1"/>
    <property type="molecule type" value="Genomic_DNA"/>
</dbReference>
<dbReference type="EMBL" id="AP009048">
    <property type="protein sequence ID" value="BAE78009.1"/>
    <property type="molecule type" value="Genomic_DNA"/>
</dbReference>
<dbReference type="PIR" id="E65120">
    <property type="entry name" value="E65120"/>
</dbReference>
<dbReference type="RefSeq" id="NP_417741.1">
    <property type="nucleotide sequence ID" value="NC_000913.3"/>
</dbReference>
<dbReference type="RefSeq" id="WP_001301412.1">
    <property type="nucleotide sequence ID" value="NZ_SSZK01000040.1"/>
</dbReference>
<dbReference type="PDB" id="1HRU">
    <property type="method" value="X-ray"/>
    <property type="resolution" value="2.00 A"/>
    <property type="chains" value="A/B=1-188"/>
</dbReference>
<dbReference type="PDB" id="2MX1">
    <property type="method" value="NMR"/>
    <property type="chains" value="A=2-190"/>
</dbReference>
<dbReference type="PDBsum" id="1HRU"/>
<dbReference type="PDBsum" id="2MX1"/>
<dbReference type="SMR" id="P45748"/>
<dbReference type="BioGRID" id="4262454">
    <property type="interactions" value="228"/>
</dbReference>
<dbReference type="DIP" id="DIP-12916N"/>
<dbReference type="FunCoup" id="P45748">
    <property type="interactions" value="386"/>
</dbReference>
<dbReference type="IntAct" id="P45748">
    <property type="interactions" value="12"/>
</dbReference>
<dbReference type="STRING" id="511145.b3282"/>
<dbReference type="jPOST" id="P45748"/>
<dbReference type="PaxDb" id="511145-b3282"/>
<dbReference type="EnsemblBacteria" id="AAC76307">
    <property type="protein sequence ID" value="AAC76307"/>
    <property type="gene ID" value="b3282"/>
</dbReference>
<dbReference type="GeneID" id="947783"/>
<dbReference type="KEGG" id="ecj:JW3243"/>
<dbReference type="KEGG" id="eco:b3282"/>
<dbReference type="KEGG" id="ecoc:C3026_17850"/>
<dbReference type="PATRIC" id="fig|1411691.4.peg.3449"/>
<dbReference type="EchoBASE" id="EB2689"/>
<dbReference type="eggNOG" id="COG0009">
    <property type="taxonomic scope" value="Bacteria"/>
</dbReference>
<dbReference type="HOGENOM" id="CLU_031397_6_0_6"/>
<dbReference type="InParanoid" id="P45748"/>
<dbReference type="OMA" id="LVDAFWP"/>
<dbReference type="OrthoDB" id="9814580at2"/>
<dbReference type="PhylomeDB" id="P45748"/>
<dbReference type="BioCyc" id="EcoCyc:G7698-MONOMER"/>
<dbReference type="BioCyc" id="MetaCyc:G7698-MONOMER"/>
<dbReference type="BRENDA" id="2.7.7.87">
    <property type="organism ID" value="2026"/>
</dbReference>
<dbReference type="EvolutionaryTrace" id="P45748"/>
<dbReference type="PRO" id="PR:P45748"/>
<dbReference type="Proteomes" id="UP000000625">
    <property type="component" value="Chromosome"/>
</dbReference>
<dbReference type="GO" id="GO:0005737">
    <property type="term" value="C:cytoplasm"/>
    <property type="evidence" value="ECO:0000314"/>
    <property type="project" value="EcoCyc"/>
</dbReference>
<dbReference type="GO" id="GO:0005829">
    <property type="term" value="C:cytosol"/>
    <property type="evidence" value="ECO:0000314"/>
    <property type="project" value="EcoCyc"/>
</dbReference>
<dbReference type="GO" id="GO:0005524">
    <property type="term" value="F:ATP binding"/>
    <property type="evidence" value="ECO:0000314"/>
    <property type="project" value="EcoCyc"/>
</dbReference>
<dbReference type="GO" id="GO:0003725">
    <property type="term" value="F:double-stranded RNA binding"/>
    <property type="evidence" value="ECO:0000314"/>
    <property type="project" value="EcoCyc"/>
</dbReference>
<dbReference type="GO" id="GO:0061710">
    <property type="term" value="F:L-threonylcarbamoyladenylate synthase"/>
    <property type="evidence" value="ECO:0000314"/>
    <property type="project" value="EcoCyc"/>
</dbReference>
<dbReference type="GO" id="GO:0016779">
    <property type="term" value="F:nucleotidyltransferase activity"/>
    <property type="evidence" value="ECO:0000314"/>
    <property type="project" value="UniProtKB"/>
</dbReference>
<dbReference type="GO" id="GO:0000049">
    <property type="term" value="F:tRNA binding"/>
    <property type="evidence" value="ECO:0000314"/>
    <property type="project" value="EcoCyc"/>
</dbReference>
<dbReference type="GO" id="GO:0006450">
    <property type="term" value="P:regulation of translational fidelity"/>
    <property type="evidence" value="ECO:0000318"/>
    <property type="project" value="GO_Central"/>
</dbReference>
<dbReference type="GO" id="GO:0006364">
    <property type="term" value="P:rRNA processing"/>
    <property type="evidence" value="ECO:0007669"/>
    <property type="project" value="UniProtKB-KW"/>
</dbReference>
<dbReference type="GO" id="GO:0002949">
    <property type="term" value="P:tRNA threonylcarbamoyladenosine modification"/>
    <property type="evidence" value="ECO:0000314"/>
    <property type="project" value="EcoCyc"/>
</dbReference>
<dbReference type="FunFam" id="3.90.870.10:FF:000004">
    <property type="entry name" value="Threonylcarbamoyl-AMP synthase"/>
    <property type="match status" value="1"/>
</dbReference>
<dbReference type="Gene3D" id="3.90.870.10">
    <property type="entry name" value="DHBP synthase"/>
    <property type="match status" value="1"/>
</dbReference>
<dbReference type="HAMAP" id="MF_01852">
    <property type="entry name" value="TsaC"/>
    <property type="match status" value="1"/>
</dbReference>
<dbReference type="InterPro" id="IPR017945">
    <property type="entry name" value="DHBP_synth_RibB-like_a/b_dom"/>
</dbReference>
<dbReference type="InterPro" id="IPR006070">
    <property type="entry name" value="Sua5-like_dom"/>
</dbReference>
<dbReference type="InterPro" id="IPR023535">
    <property type="entry name" value="TC-AMP_synthase"/>
</dbReference>
<dbReference type="InterPro" id="IPR050156">
    <property type="entry name" value="TC-AMP_synthase_SUA5"/>
</dbReference>
<dbReference type="NCBIfam" id="NF007919">
    <property type="entry name" value="PRK10634.1"/>
    <property type="match status" value="1"/>
</dbReference>
<dbReference type="PANTHER" id="PTHR17490">
    <property type="entry name" value="SUA5"/>
    <property type="match status" value="1"/>
</dbReference>
<dbReference type="PANTHER" id="PTHR17490:SF18">
    <property type="entry name" value="THREONYLCARBAMOYL-AMP SYNTHASE"/>
    <property type="match status" value="1"/>
</dbReference>
<dbReference type="Pfam" id="PF01300">
    <property type="entry name" value="Sua5_yciO_yrdC"/>
    <property type="match status" value="1"/>
</dbReference>
<dbReference type="SUPFAM" id="SSF55821">
    <property type="entry name" value="YrdC/RibB"/>
    <property type="match status" value="1"/>
</dbReference>
<dbReference type="PROSITE" id="PS51163">
    <property type="entry name" value="YRDC"/>
    <property type="match status" value="1"/>
</dbReference>
<name>TSAC_ECOLI</name>
<evidence type="ECO:0000255" key="1">
    <source>
        <dbReference type="HAMAP-Rule" id="MF_01852"/>
    </source>
</evidence>
<evidence type="ECO:0000269" key="2">
    <source>
    </source>
</evidence>
<evidence type="ECO:0000269" key="3">
    <source>
    </source>
</evidence>
<evidence type="ECO:0000269" key="4">
    <source>
    </source>
</evidence>
<evidence type="ECO:0000269" key="5">
    <source>
    </source>
</evidence>
<evidence type="ECO:0000269" key="6">
    <source>
    </source>
</evidence>
<evidence type="ECO:0000305" key="7"/>
<evidence type="ECO:0000305" key="8">
    <source>
    </source>
</evidence>
<evidence type="ECO:0000305" key="9">
    <source>
    </source>
</evidence>
<evidence type="ECO:0007829" key="10">
    <source>
        <dbReference type="PDB" id="1HRU"/>
    </source>
</evidence>
<evidence type="ECO:0007829" key="11">
    <source>
        <dbReference type="PDB" id="2MX1"/>
    </source>
</evidence>
<gene>
    <name evidence="1" type="primary">tsaC</name>
    <name type="synonym">rimN</name>
    <name type="synonym">yrdC</name>
    <name type="ordered locus">b3282</name>
    <name type="ordered locus">JW3243</name>
</gene>
<comment type="function">
    <text evidence="1 2 3 4 5 6">Required for the formation of a threonylcarbamoyl group on adenosine at position 37 (t(6)A37) in tRNAs that read codons beginning with adenine. Catalyzes the conversion of L-threonine, HCO(3)(-)/CO(2) and ATP to give threonylcarbamoyl-AMP (TC-AMP) as the acyladenylate intermediate, with the release of diphosphate. Is also able to catalyze the reverse reaction in vitro, i.e. the formation of ATP from TC-AMP and PPi. Shows higher affinity for the full-length tRNA(Thr) lacking only the t(6)A37 modification than for its fully modified counterpart. Could also be required for the maturation of 16S rRNA. Binds to double-stranded RNA but does not interact tightly with either of the ribosomal subunits, or the 70S particles.</text>
</comment>
<comment type="catalytic activity">
    <reaction evidence="1 6">
        <text>L-threonine + hydrogencarbonate + ATP = L-threonylcarbamoyladenylate + diphosphate + H2O</text>
        <dbReference type="Rhea" id="RHEA:36407"/>
        <dbReference type="ChEBI" id="CHEBI:15377"/>
        <dbReference type="ChEBI" id="CHEBI:17544"/>
        <dbReference type="ChEBI" id="CHEBI:30616"/>
        <dbReference type="ChEBI" id="CHEBI:33019"/>
        <dbReference type="ChEBI" id="CHEBI:57926"/>
        <dbReference type="ChEBI" id="CHEBI:73682"/>
        <dbReference type="EC" id="2.7.7.87"/>
    </reaction>
</comment>
<comment type="biophysicochemical properties">
    <kinetics>
        <KM evidence="6">93 uM for ATP</KM>
        <KM evidence="6">0.68 uM for L-threonylcarbamoyl-AMP</KM>
        <text>kcat is 0.10 sec(-1) for ATP-dependent TC-AMP formation and 20 sec(-1) for the reverse reaction.</text>
    </kinetics>
</comment>
<comment type="subunit">
    <text evidence="5">Interacts with TsaB and TsaD.</text>
</comment>
<comment type="subcellular location">
    <subcellularLocation>
        <location evidence="1">Cytoplasm</location>
    </subcellularLocation>
</comment>
<comment type="disruption phenotype">
    <text evidence="3">The knockdown of this gene results in a loss of t(6)A37 modification in tRNAs.</text>
</comment>
<comment type="miscellaneous">
    <text evidence="8">TsaBCDE are necessary and sufficient for tRNA(NNU) t(6)A37 threonylcarbamoyladenosine modification in vitro in E.coli.</text>
</comment>
<comment type="miscellaneous">
    <text evidence="9">Unlike previously thought, the formation of TC-AMP does not proceed via an ATP-activated HCO(3)(-) intermediate such as carboxy-AMP.</text>
</comment>
<comment type="similarity">
    <text evidence="1">Belongs to the SUA5 family. TsaC subfamily.</text>
</comment>
<comment type="caution">
    <text evidence="9">Was also proposed to catalyze the transfer of the threonylcarbamoyl moiety of TC-AMP to the N6 group of A37 (PubMed:21285948, PubMed:21775474). However, it was shown that this reaction is catalyzed in B.subtilis by the TsaEBD proteins (PubMed:23072323).</text>
</comment>
<comment type="caution">
    <text evidence="7">The well-known t(6)A modification appears to be a hydrolyzed artifact of natural cyclic t(6)A (ct(6)A) that occurs during the preparation and handling of tRNA in E.coli and many other species (PubMed:23242255). In these species, the t(6)A modification is processed further by dehydration into ct(6)A, a reaction catalyzed by TcdA.</text>
</comment>
<comment type="sequence caution" evidence="7">
    <conflict type="frameshift">
        <sequence resource="EMBL-CDS" id="AAA58079"/>
    </conflict>
</comment>
<keyword id="KW-0002">3D-structure</keyword>
<keyword id="KW-0067">ATP-binding</keyword>
<keyword id="KW-0963">Cytoplasm</keyword>
<keyword id="KW-0547">Nucleotide-binding</keyword>
<keyword id="KW-0548">Nucleotidyltransferase</keyword>
<keyword id="KW-1185">Reference proteome</keyword>
<keyword id="KW-0690">Ribosome biogenesis</keyword>
<keyword id="KW-0694">RNA-binding</keyword>
<keyword id="KW-0698">rRNA processing</keyword>
<keyword id="KW-0808">Transferase</keyword>
<keyword id="KW-0819">tRNA processing</keyword>
<keyword id="KW-0820">tRNA-binding</keyword>
<reference key="1">
    <citation type="journal article" date="1997" name="Science">
        <title>The complete genome sequence of Escherichia coli K-12.</title>
        <authorList>
            <person name="Blattner F.R."/>
            <person name="Plunkett G. III"/>
            <person name="Bloch C.A."/>
            <person name="Perna N.T."/>
            <person name="Burland V."/>
            <person name="Riley M."/>
            <person name="Collado-Vides J."/>
            <person name="Glasner J.D."/>
            <person name="Rode C.K."/>
            <person name="Mayhew G.F."/>
            <person name="Gregor J."/>
            <person name="Davis N.W."/>
            <person name="Kirkpatrick H.A."/>
            <person name="Goeden M.A."/>
            <person name="Rose D.J."/>
            <person name="Mau B."/>
            <person name="Shao Y."/>
        </authorList>
    </citation>
    <scope>NUCLEOTIDE SEQUENCE [LARGE SCALE GENOMIC DNA]</scope>
    <source>
        <strain>K12 / MG1655 / ATCC 47076</strain>
    </source>
</reference>
<reference key="2">
    <citation type="journal article" date="2006" name="Mol. Syst. Biol.">
        <title>Highly accurate genome sequences of Escherichia coli K-12 strains MG1655 and W3110.</title>
        <authorList>
            <person name="Hayashi K."/>
            <person name="Morooka N."/>
            <person name="Yamamoto Y."/>
            <person name="Fujita K."/>
            <person name="Isono K."/>
            <person name="Choi S."/>
            <person name="Ohtsubo E."/>
            <person name="Baba T."/>
            <person name="Wanner B.L."/>
            <person name="Mori H."/>
            <person name="Horiuchi T."/>
        </authorList>
    </citation>
    <scope>NUCLEOTIDE SEQUENCE [LARGE SCALE GENOMIC DNA]</scope>
    <source>
        <strain>K12 / W3110 / ATCC 27325 / DSM 5911</strain>
    </source>
</reference>
<reference key="3">
    <citation type="journal article" date="1999" name="Electrophoresis">
        <title>Enrichment of low abundance proteins of Escherichia coli by hydroxyapatite chromatography.</title>
        <authorList>
            <person name="Fountoulakis M."/>
            <person name="Takacs M.-F."/>
            <person name="Berndt P."/>
            <person name="Langen H."/>
            <person name="Takacs B."/>
        </authorList>
    </citation>
    <scope>IDENTIFICATION BY MASS SPECTROMETRY</scope>
    <source>
        <strain>B / BL21</strain>
    </source>
</reference>
<reference key="4">
    <citation type="journal article" date="2005" name="Biochim. Biophys. Acta">
        <title>The YrdC protein -- a putative ribosome maturation factor.</title>
        <authorList>
            <person name="Kaczanowska M."/>
            <person name="Ryden-Aulin M."/>
        </authorList>
    </citation>
    <scope>FUNCTION IN MATURATION OF 16S RRNA</scope>
    <source>
        <strain>K12 / MG1655 / ATCC 47076</strain>
    </source>
</reference>
<reference key="5">
    <citation type="journal article" date="2009" name="Nucleic Acids Res.">
        <title>The universal YrdC/Sua5 family is required for the formation of threonylcarbamoyladenosine in tRNA.</title>
        <authorList>
            <person name="El Yacoubi B."/>
            <person name="Lyons B."/>
            <person name="Cruz Y."/>
            <person name="Reddy R."/>
            <person name="Nordin B."/>
            <person name="Agnelli F."/>
            <person name="Williamson J.R."/>
            <person name="Schimmel P."/>
            <person name="Swairjo M.A."/>
            <person name="de Crecy-Lagard V."/>
        </authorList>
    </citation>
    <scope>FUNCTION</scope>
    <scope>ATP-BINDING</scope>
    <scope>TRNA-BINDING</scope>
    <scope>DISRUPTION PHENOTYPE</scope>
    <scope>MUTAGENESIS OF LYS-50; ARG-52; LYS-56 AND ARG-110</scope>
    <source>
        <strain>K12 / MG1655 / ATCC 47076</strain>
    </source>
</reference>
<reference key="6">
    <citation type="journal article" date="2011" name="EMBO J.">
        <title>A role for the universal Kae1/Qri7/YgjD (COG0533) family in tRNA modification.</title>
        <authorList>
            <person name="El Yacoubi B."/>
            <person name="Hatin I."/>
            <person name="Deutsch C."/>
            <person name="Kahveci T."/>
            <person name="Rousset J.P."/>
            <person name="Iwata-Reuyl D."/>
            <person name="Murzin A.G."/>
            <person name="de Crecy-Lagard V."/>
        </authorList>
    </citation>
    <scope>FUNCTION</scope>
    <source>
        <strain>K12</strain>
    </source>
</reference>
<reference key="7">
    <citation type="journal article" date="2011" name="RNA">
        <title>YrdC exhibits properties expected of a subunit for a tRNA threonylcarbamoyl transferase.</title>
        <authorList>
            <person name="Harris K.A."/>
            <person name="Jones V."/>
            <person name="Bilbille Y."/>
            <person name="Swairjo M.A."/>
            <person name="Agris P.F."/>
        </authorList>
    </citation>
    <scope>PROPOSED FUNCTION AS A THREONYLCARBAMOYLTRANSFERASE</scope>
    <scope>TRNA-BINDING</scope>
    <scope>ATP-BINDING</scope>
    <scope>THREONINE-BINDING</scope>
    <source>
        <strain>K12 / MG1655 / ATCC 47076</strain>
    </source>
</reference>
<reference key="8">
    <citation type="journal article" date="2012" name="Biochemistry">
        <title>Mechanism of N6-threonylcarbamoyladenosine (t(6)A) biosynthesis: isolation and characterization of the intermediate threonylcarbamoyl-AMP.</title>
        <authorList>
            <person name="Lauhon C.T."/>
        </authorList>
    </citation>
    <scope>FUNCTION AS A TC-AMP SYNTHASE</scope>
    <scope>CATALYTIC ACTIVITY</scope>
    <scope>KINETIC PARAMETERS</scope>
</reference>
<reference key="9">
    <citation type="journal article" date="2012" name="J. Biol. Chem.">
        <title>Biosynthesis of threonylcarbamoyl adenosine (t6A), a universal tRNA nucleoside.</title>
        <authorList>
            <person name="Deutsch C."/>
            <person name="El Yacoubi B."/>
            <person name="de Crecy-Lagard V."/>
            <person name="Iwata-Reuyl D."/>
        </authorList>
    </citation>
    <scope>FUNCTION IN T(6)A37 FORMATION</scope>
    <scope>GENE NAME</scope>
    <scope>INTERACTION WITH TSAB AND TSAD</scope>
    <source>
        <strain>K12</strain>
    </source>
</reference>
<reference key="10">
    <citation type="journal article" date="2000" name="Protein Sci.">
        <title>The structure of the yrdC gene product from Escherichia coli reveals a new fold and suggests a role in RNA binding.</title>
        <authorList>
            <person name="Teplova M."/>
            <person name="Tereshko V."/>
            <person name="Sanishvili R."/>
            <person name="Joachimiak A."/>
            <person name="Bushueva T."/>
            <person name="Anderson W.F."/>
            <person name="Egli M."/>
        </authorList>
    </citation>
    <scope>X-RAY CRYSTALLOGRAPHY (2.0 ANGSTROMS)</scope>
    <scope>RNA-BINDING</scope>
</reference>
<proteinExistence type="evidence at protein level"/>
<feature type="chain" id="PRO_0000202018" description="Threonylcarbamoyl-AMP synthase">
    <location>
        <begin position="1"/>
        <end position="190"/>
    </location>
</feature>
<feature type="domain" description="YrdC-like" evidence="1">
    <location>
        <begin position="7"/>
        <end position="190"/>
    </location>
</feature>
<feature type="mutagenesis site" description="Loss of activity." evidence="3">
    <original>K</original>
    <variation>A</variation>
    <location>
        <position position="50"/>
    </location>
</feature>
<feature type="mutagenesis site" description="Loss of activity." evidence="3">
    <original>R</original>
    <variation>A</variation>
    <location>
        <position position="52"/>
    </location>
</feature>
<feature type="mutagenesis site" description="No change in activity." evidence="3">
    <original>K</original>
    <variation>A</variation>
    <location>
        <position position="56"/>
    </location>
</feature>
<feature type="mutagenesis site" description="No change in activity." evidence="3">
    <original>R</original>
    <variation>A</variation>
    <location>
        <position position="110"/>
    </location>
</feature>
<feature type="helix" evidence="10">
    <location>
        <begin position="4"/>
        <end position="18"/>
    </location>
</feature>
<feature type="strand" evidence="10">
    <location>
        <begin position="23"/>
        <end position="26"/>
    </location>
</feature>
<feature type="strand" evidence="10">
    <location>
        <begin position="28"/>
        <end position="35"/>
    </location>
</feature>
<feature type="helix" evidence="10">
    <location>
        <begin position="40"/>
        <end position="50"/>
    </location>
</feature>
<feature type="helix" evidence="10">
    <location>
        <begin position="54"/>
        <end position="56"/>
    </location>
</feature>
<feature type="strand" evidence="10">
    <location>
        <begin position="59"/>
        <end position="64"/>
    </location>
</feature>
<feature type="helix" evidence="10">
    <location>
        <begin position="65"/>
        <end position="68"/>
    </location>
</feature>
<feature type="helix" evidence="10">
    <location>
        <begin position="69"/>
        <end position="71"/>
    </location>
</feature>
<feature type="turn" evidence="11">
    <location>
        <begin position="74"/>
        <end position="76"/>
    </location>
</feature>
<feature type="helix" evidence="10">
    <location>
        <begin position="79"/>
        <end position="86"/>
    </location>
</feature>
<feature type="strand" evidence="10">
    <location>
        <begin position="90"/>
        <end position="98"/>
    </location>
</feature>
<feature type="strand" evidence="11">
    <location>
        <begin position="101"/>
        <end position="103"/>
    </location>
</feature>
<feature type="helix" evidence="10">
    <location>
        <begin position="105"/>
        <end position="108"/>
    </location>
</feature>
<feature type="strand" evidence="10">
    <location>
        <begin position="111"/>
        <end position="118"/>
    </location>
</feature>
<feature type="helix" evidence="10">
    <location>
        <begin position="122"/>
        <end position="131"/>
    </location>
</feature>
<feature type="strand" evidence="10">
    <location>
        <begin position="135"/>
        <end position="140"/>
    </location>
</feature>
<feature type="strand" evidence="11">
    <location>
        <begin position="143"/>
        <end position="145"/>
    </location>
</feature>
<feature type="helix" evidence="10">
    <location>
        <begin position="151"/>
        <end position="158"/>
    </location>
</feature>
<feature type="strand" evidence="11">
    <location>
        <begin position="161"/>
        <end position="164"/>
    </location>
</feature>
<feature type="strand" evidence="10">
    <location>
        <begin position="177"/>
        <end position="180"/>
    </location>
</feature>
<feature type="turn" evidence="10">
    <location>
        <begin position="181"/>
        <end position="183"/>
    </location>
</feature>
<feature type="strand" evidence="10">
    <location>
        <begin position="184"/>
        <end position="186"/>
    </location>
</feature>
<accession>P45748</accession>
<accession>Q2M6U7</accession>